<protein>
    <recommendedName>
        <fullName evidence="1">Pantothenate synthetase</fullName>
        <shortName evidence="1">PS</shortName>
        <ecNumber evidence="1">6.3.2.1</ecNumber>
    </recommendedName>
    <alternativeName>
        <fullName evidence="1">Pantoate--beta-alanine ligase</fullName>
    </alternativeName>
    <alternativeName>
        <fullName evidence="1">Pantoate-activating enzyme</fullName>
    </alternativeName>
</protein>
<comment type="function">
    <text evidence="1">Catalyzes the condensation of pantoate with beta-alanine in an ATP-dependent reaction via a pantoyl-adenylate intermediate.</text>
</comment>
<comment type="catalytic activity">
    <reaction evidence="1">
        <text>(R)-pantoate + beta-alanine + ATP = (R)-pantothenate + AMP + diphosphate + H(+)</text>
        <dbReference type="Rhea" id="RHEA:10912"/>
        <dbReference type="ChEBI" id="CHEBI:15378"/>
        <dbReference type="ChEBI" id="CHEBI:15980"/>
        <dbReference type="ChEBI" id="CHEBI:29032"/>
        <dbReference type="ChEBI" id="CHEBI:30616"/>
        <dbReference type="ChEBI" id="CHEBI:33019"/>
        <dbReference type="ChEBI" id="CHEBI:57966"/>
        <dbReference type="ChEBI" id="CHEBI:456215"/>
        <dbReference type="EC" id="6.3.2.1"/>
    </reaction>
</comment>
<comment type="pathway">
    <text evidence="1">Cofactor biosynthesis; (R)-pantothenate biosynthesis; (R)-pantothenate from (R)-pantoate and beta-alanine: step 1/1.</text>
</comment>
<comment type="subunit">
    <text evidence="1">Homodimer.</text>
</comment>
<comment type="subcellular location">
    <subcellularLocation>
        <location evidence="1">Cytoplasm</location>
    </subcellularLocation>
</comment>
<comment type="miscellaneous">
    <text evidence="1">The reaction proceeds by a bi uni uni bi ping pong mechanism.</text>
</comment>
<comment type="similarity">
    <text evidence="1">Belongs to the pantothenate synthetase family.</text>
</comment>
<proteinExistence type="inferred from homology"/>
<gene>
    <name evidence="1" type="primary">panC</name>
    <name type="ordered locus">THA_1817</name>
</gene>
<evidence type="ECO:0000255" key="1">
    <source>
        <dbReference type="HAMAP-Rule" id="MF_00158"/>
    </source>
</evidence>
<accession>B7IE21</accession>
<sequence>MKVIEKIEEMKKISREILESKKAIGFVPTMGFLHEGHLSLVKAAKSENDITVVSIFVNPTQFGPNEDYNNYPRDLERDLSMLKDMEVDYVFVPSVEEMYPDSFSTYVEEIKLSRFLCGASRPGHFRGVCTVVTKLFNIVKPTRAYFGQKDAQQFRVLRRMVRDLNMDVELVEMPIVREPDGLALSSRNTYLNDEERKEAVRLYKSLLKAKELIESGEKDVEIIKNEMKKILTHPLLRIDYIEIVDEENLEPVEKIDRRVIIAIAVFVGRARLIDNMII</sequence>
<name>PANC_THEAB</name>
<organism>
    <name type="scientific">Thermosipho africanus (strain TCF52B)</name>
    <dbReference type="NCBI Taxonomy" id="484019"/>
    <lineage>
        <taxon>Bacteria</taxon>
        <taxon>Thermotogati</taxon>
        <taxon>Thermotogota</taxon>
        <taxon>Thermotogae</taxon>
        <taxon>Thermotogales</taxon>
        <taxon>Fervidobacteriaceae</taxon>
        <taxon>Thermosipho</taxon>
    </lineage>
</organism>
<keyword id="KW-0067">ATP-binding</keyword>
<keyword id="KW-0963">Cytoplasm</keyword>
<keyword id="KW-0436">Ligase</keyword>
<keyword id="KW-0547">Nucleotide-binding</keyword>
<keyword id="KW-0566">Pantothenate biosynthesis</keyword>
<keyword id="KW-1185">Reference proteome</keyword>
<reference key="1">
    <citation type="journal article" date="2009" name="J. Bacteriol.">
        <title>The genome of Thermosipho africanus TCF52B: lateral genetic connections to the Firmicutes and Archaea.</title>
        <authorList>
            <person name="Nesboe C.L."/>
            <person name="Bapteste E."/>
            <person name="Curtis B."/>
            <person name="Dahle H."/>
            <person name="Lopez P."/>
            <person name="Macleod D."/>
            <person name="Dlutek M."/>
            <person name="Bowman S."/>
            <person name="Zhaxybayeva O."/>
            <person name="Birkeland N.-K."/>
            <person name="Doolittle W.F."/>
        </authorList>
    </citation>
    <scope>NUCLEOTIDE SEQUENCE [LARGE SCALE GENOMIC DNA]</scope>
    <source>
        <strain>TCF52B</strain>
    </source>
</reference>
<feature type="chain" id="PRO_1000118157" description="Pantothenate synthetase">
    <location>
        <begin position="1"/>
        <end position="278"/>
    </location>
</feature>
<feature type="active site" description="Proton donor" evidence="1">
    <location>
        <position position="37"/>
    </location>
</feature>
<feature type="binding site" evidence="1">
    <location>
        <begin position="30"/>
        <end position="37"/>
    </location>
    <ligand>
        <name>ATP</name>
        <dbReference type="ChEBI" id="CHEBI:30616"/>
    </ligand>
</feature>
<feature type="binding site" evidence="1">
    <location>
        <position position="61"/>
    </location>
    <ligand>
        <name>(R)-pantoate</name>
        <dbReference type="ChEBI" id="CHEBI:15980"/>
    </ligand>
</feature>
<feature type="binding site" evidence="1">
    <location>
        <position position="61"/>
    </location>
    <ligand>
        <name>beta-alanine</name>
        <dbReference type="ChEBI" id="CHEBI:57966"/>
    </ligand>
</feature>
<feature type="binding site" evidence="1">
    <location>
        <begin position="147"/>
        <end position="150"/>
    </location>
    <ligand>
        <name>ATP</name>
        <dbReference type="ChEBI" id="CHEBI:30616"/>
    </ligand>
</feature>
<feature type="binding site" evidence="1">
    <location>
        <position position="153"/>
    </location>
    <ligand>
        <name>(R)-pantoate</name>
        <dbReference type="ChEBI" id="CHEBI:15980"/>
    </ligand>
</feature>
<feature type="binding site" evidence="1">
    <location>
        <position position="176"/>
    </location>
    <ligand>
        <name>ATP</name>
        <dbReference type="ChEBI" id="CHEBI:30616"/>
    </ligand>
</feature>
<feature type="binding site" evidence="1">
    <location>
        <begin position="184"/>
        <end position="187"/>
    </location>
    <ligand>
        <name>ATP</name>
        <dbReference type="ChEBI" id="CHEBI:30616"/>
    </ligand>
</feature>
<dbReference type="EC" id="6.3.2.1" evidence="1"/>
<dbReference type="EMBL" id="CP001185">
    <property type="protein sequence ID" value="ACJ76248.1"/>
    <property type="molecule type" value="Genomic_DNA"/>
</dbReference>
<dbReference type="RefSeq" id="WP_012580440.1">
    <property type="nucleotide sequence ID" value="NC_011653.1"/>
</dbReference>
<dbReference type="SMR" id="B7IE21"/>
<dbReference type="STRING" id="484019.THA_1817"/>
<dbReference type="KEGG" id="taf:THA_1817"/>
<dbReference type="eggNOG" id="COG0414">
    <property type="taxonomic scope" value="Bacteria"/>
</dbReference>
<dbReference type="HOGENOM" id="CLU_047148_0_0_0"/>
<dbReference type="OrthoDB" id="9773087at2"/>
<dbReference type="UniPathway" id="UPA00028">
    <property type="reaction ID" value="UER00005"/>
</dbReference>
<dbReference type="Proteomes" id="UP000002453">
    <property type="component" value="Chromosome"/>
</dbReference>
<dbReference type="GO" id="GO:0005829">
    <property type="term" value="C:cytosol"/>
    <property type="evidence" value="ECO:0007669"/>
    <property type="project" value="TreeGrafter"/>
</dbReference>
<dbReference type="GO" id="GO:0005524">
    <property type="term" value="F:ATP binding"/>
    <property type="evidence" value="ECO:0007669"/>
    <property type="project" value="UniProtKB-KW"/>
</dbReference>
<dbReference type="GO" id="GO:0004592">
    <property type="term" value="F:pantoate-beta-alanine ligase activity"/>
    <property type="evidence" value="ECO:0007669"/>
    <property type="project" value="UniProtKB-UniRule"/>
</dbReference>
<dbReference type="GO" id="GO:0015940">
    <property type="term" value="P:pantothenate biosynthetic process"/>
    <property type="evidence" value="ECO:0007669"/>
    <property type="project" value="UniProtKB-UniRule"/>
</dbReference>
<dbReference type="CDD" id="cd00560">
    <property type="entry name" value="PanC"/>
    <property type="match status" value="1"/>
</dbReference>
<dbReference type="FunFam" id="3.30.1300.10:FF:000001">
    <property type="entry name" value="Pantothenate synthetase"/>
    <property type="match status" value="1"/>
</dbReference>
<dbReference type="FunFam" id="3.40.50.620:FF:000013">
    <property type="entry name" value="Pantothenate synthetase"/>
    <property type="match status" value="1"/>
</dbReference>
<dbReference type="Gene3D" id="3.40.50.620">
    <property type="entry name" value="HUPs"/>
    <property type="match status" value="1"/>
</dbReference>
<dbReference type="Gene3D" id="3.30.1300.10">
    <property type="entry name" value="Pantoate-beta-alanine ligase, C-terminal domain"/>
    <property type="match status" value="1"/>
</dbReference>
<dbReference type="HAMAP" id="MF_00158">
    <property type="entry name" value="PanC"/>
    <property type="match status" value="1"/>
</dbReference>
<dbReference type="InterPro" id="IPR004821">
    <property type="entry name" value="Cyt_trans-like"/>
</dbReference>
<dbReference type="InterPro" id="IPR003721">
    <property type="entry name" value="Pantoate_ligase"/>
</dbReference>
<dbReference type="InterPro" id="IPR042176">
    <property type="entry name" value="Pantoate_ligase_C"/>
</dbReference>
<dbReference type="InterPro" id="IPR014729">
    <property type="entry name" value="Rossmann-like_a/b/a_fold"/>
</dbReference>
<dbReference type="NCBIfam" id="TIGR00125">
    <property type="entry name" value="cyt_tran_rel"/>
    <property type="match status" value="1"/>
</dbReference>
<dbReference type="NCBIfam" id="TIGR00018">
    <property type="entry name" value="panC"/>
    <property type="match status" value="1"/>
</dbReference>
<dbReference type="PANTHER" id="PTHR21299">
    <property type="entry name" value="CYTIDYLATE KINASE/PANTOATE-BETA-ALANINE LIGASE"/>
    <property type="match status" value="1"/>
</dbReference>
<dbReference type="PANTHER" id="PTHR21299:SF1">
    <property type="entry name" value="PANTOATE--BETA-ALANINE LIGASE"/>
    <property type="match status" value="1"/>
</dbReference>
<dbReference type="Pfam" id="PF02569">
    <property type="entry name" value="Pantoate_ligase"/>
    <property type="match status" value="1"/>
</dbReference>
<dbReference type="SUPFAM" id="SSF52374">
    <property type="entry name" value="Nucleotidylyl transferase"/>
    <property type="match status" value="1"/>
</dbReference>